<accession>P95487</accession>
<accession>B0KQ31</accession>
<feature type="chain" id="PRO_0000092197" description="Cytochrome c biogenesis ATP-binding export protein CcmA">
    <location>
        <begin position="1"/>
        <end position="210"/>
    </location>
</feature>
<feature type="domain" description="ABC transporter" evidence="1">
    <location>
        <begin position="3"/>
        <end position="205"/>
    </location>
</feature>
<feature type="binding site" evidence="1">
    <location>
        <begin position="37"/>
        <end position="44"/>
    </location>
    <ligand>
        <name>ATP</name>
        <dbReference type="ChEBI" id="CHEBI:30616"/>
    </ligand>
</feature>
<feature type="sequence conflict" description="In Ref. 2; AAC63581." evidence="2" ref="2">
    <original>QILLGGKPLA</original>
    <variation>ADPAGAQRLR</variation>
    <location>
        <begin position="60"/>
        <end position="69"/>
    </location>
</feature>
<feature type="sequence conflict" description="In Ref. 2; AAC63581." evidence="2" ref="2">
    <original>A</original>
    <variation>R</variation>
    <location>
        <position position="76"/>
    </location>
</feature>
<feature type="sequence conflict" description="In Ref. 2; AAC63581." evidence="2" ref="2">
    <original>A</original>
    <variation>P</variation>
    <location>
        <position position="86"/>
    </location>
</feature>
<feature type="sequence conflict" description="In Ref. 2; AAC63581." evidence="2" ref="2">
    <original>H</original>
    <variation>D</variation>
    <location>
        <position position="105"/>
    </location>
</feature>
<feature type="sequence conflict" description="In Ref. 2; AAC63581." evidence="2" ref="2">
    <original>AIWA</original>
    <variation>RL</variation>
    <location>
        <begin position="112"/>
        <end position="115"/>
    </location>
</feature>
<feature type="sequence conflict" description="In Ref. 2; AAC63581." evidence="2" ref="2">
    <original>CHT</original>
    <variation>VPY</variation>
    <location>
        <begin position="130"/>
        <end position="132"/>
    </location>
</feature>
<feature type="sequence conflict" description="In Ref. 2; AAC63581." evidence="2" ref="2">
    <original>CP</original>
    <variation>AR</variation>
    <location>
        <begin position="150"/>
        <end position="151"/>
    </location>
</feature>
<feature type="sequence conflict" description="In Ref. 2; AAC63581." evidence="2" ref="2">
    <original>VAQLEAH</original>
    <variation>AGAAGSS</variation>
    <location>
        <begin position="168"/>
        <end position="174"/>
    </location>
</feature>
<feature type="sequence conflict" description="In Ref. 2; AAC63581." evidence="2" ref="2">
    <original>T</original>
    <variation>H</variation>
    <location>
        <position position="184"/>
    </location>
</feature>
<feature type="sequence conflict" description="In Ref. 2; AAC63581." evidence="2" ref="2">
    <original>S</original>
    <variation>P</variation>
    <location>
        <position position="198"/>
    </location>
</feature>
<protein>
    <recommendedName>
        <fullName evidence="1">Cytochrome c biogenesis ATP-binding export protein CcmA</fullName>
        <ecNumber evidence="1">7.6.2.5</ecNumber>
    </recommendedName>
    <alternativeName>
        <fullName evidence="1">Heme exporter protein A</fullName>
    </alternativeName>
</protein>
<organism>
    <name type="scientific">Pseudomonas putida (strain GB-1)</name>
    <dbReference type="NCBI Taxonomy" id="76869"/>
    <lineage>
        <taxon>Bacteria</taxon>
        <taxon>Pseudomonadati</taxon>
        <taxon>Pseudomonadota</taxon>
        <taxon>Gammaproteobacteria</taxon>
        <taxon>Pseudomonadales</taxon>
        <taxon>Pseudomonadaceae</taxon>
        <taxon>Pseudomonas</taxon>
    </lineage>
</organism>
<dbReference type="EC" id="7.6.2.5" evidence="1"/>
<dbReference type="EMBL" id="CP000926">
    <property type="protein sequence ID" value="ABY99786.1"/>
    <property type="molecule type" value="Genomic_DNA"/>
</dbReference>
<dbReference type="EMBL" id="U85716">
    <property type="protein sequence ID" value="AAC63581.1"/>
    <property type="molecule type" value="Genomic_DNA"/>
</dbReference>
<dbReference type="RefSeq" id="WP_012273478.1">
    <property type="nucleotide sequence ID" value="NC_010322.1"/>
</dbReference>
<dbReference type="SMR" id="P95487"/>
<dbReference type="GeneID" id="83671200"/>
<dbReference type="KEGG" id="ppg:PputGB1_3896"/>
<dbReference type="eggNOG" id="COG4133">
    <property type="taxonomic scope" value="Bacteria"/>
</dbReference>
<dbReference type="HOGENOM" id="CLU_000604_1_2_6"/>
<dbReference type="Proteomes" id="UP000002157">
    <property type="component" value="Chromosome"/>
</dbReference>
<dbReference type="GO" id="GO:0005886">
    <property type="term" value="C:plasma membrane"/>
    <property type="evidence" value="ECO:0007669"/>
    <property type="project" value="UniProtKB-SubCell"/>
</dbReference>
<dbReference type="GO" id="GO:0015439">
    <property type="term" value="F:ABC-type heme transporter activity"/>
    <property type="evidence" value="ECO:0007669"/>
    <property type="project" value="UniProtKB-EC"/>
</dbReference>
<dbReference type="GO" id="GO:0005524">
    <property type="term" value="F:ATP binding"/>
    <property type="evidence" value="ECO:0007669"/>
    <property type="project" value="UniProtKB-KW"/>
</dbReference>
<dbReference type="GO" id="GO:0016887">
    <property type="term" value="F:ATP hydrolysis activity"/>
    <property type="evidence" value="ECO:0007669"/>
    <property type="project" value="InterPro"/>
</dbReference>
<dbReference type="GO" id="GO:0017004">
    <property type="term" value="P:cytochrome complex assembly"/>
    <property type="evidence" value="ECO:0007669"/>
    <property type="project" value="UniProtKB-KW"/>
</dbReference>
<dbReference type="CDD" id="cd03231">
    <property type="entry name" value="ABC_CcmA_heme_exporter"/>
    <property type="match status" value="1"/>
</dbReference>
<dbReference type="Gene3D" id="3.40.50.300">
    <property type="entry name" value="P-loop containing nucleotide triphosphate hydrolases"/>
    <property type="match status" value="1"/>
</dbReference>
<dbReference type="InterPro" id="IPR003593">
    <property type="entry name" value="AAA+_ATPase"/>
</dbReference>
<dbReference type="InterPro" id="IPR003439">
    <property type="entry name" value="ABC_transporter-like_ATP-bd"/>
</dbReference>
<dbReference type="InterPro" id="IPR005895">
    <property type="entry name" value="ABC_transptr_haem_export_CcmA"/>
</dbReference>
<dbReference type="InterPro" id="IPR027417">
    <property type="entry name" value="P-loop_NTPase"/>
</dbReference>
<dbReference type="NCBIfam" id="TIGR01189">
    <property type="entry name" value="ccmA"/>
    <property type="match status" value="1"/>
</dbReference>
<dbReference type="NCBIfam" id="NF010061">
    <property type="entry name" value="PRK13538.1"/>
    <property type="match status" value="1"/>
</dbReference>
<dbReference type="PANTHER" id="PTHR43499">
    <property type="entry name" value="ABC TRANSPORTER I FAMILY MEMBER 1"/>
    <property type="match status" value="1"/>
</dbReference>
<dbReference type="PANTHER" id="PTHR43499:SF1">
    <property type="entry name" value="ABC TRANSPORTER I FAMILY MEMBER 1"/>
    <property type="match status" value="1"/>
</dbReference>
<dbReference type="Pfam" id="PF00005">
    <property type="entry name" value="ABC_tran"/>
    <property type="match status" value="1"/>
</dbReference>
<dbReference type="SMART" id="SM00382">
    <property type="entry name" value="AAA"/>
    <property type="match status" value="1"/>
</dbReference>
<dbReference type="SUPFAM" id="SSF52540">
    <property type="entry name" value="P-loop containing nucleoside triphosphate hydrolases"/>
    <property type="match status" value="1"/>
</dbReference>
<dbReference type="PROSITE" id="PS50893">
    <property type="entry name" value="ABC_TRANSPORTER_2"/>
    <property type="match status" value="1"/>
</dbReference>
<dbReference type="PROSITE" id="PS51243">
    <property type="entry name" value="CCMA"/>
    <property type="match status" value="1"/>
</dbReference>
<comment type="function">
    <text evidence="1">Part of the ABC transporter complex CcmAB involved in the biogenesis of c-type cytochromes; once thought to export heme, this seems not to be the case, but its exact role is uncertain. Responsible for energy coupling to the transport system.</text>
</comment>
<comment type="catalytic activity">
    <reaction evidence="1">
        <text>heme b(in) + ATP + H2O = heme b(out) + ADP + phosphate + H(+)</text>
        <dbReference type="Rhea" id="RHEA:19261"/>
        <dbReference type="ChEBI" id="CHEBI:15377"/>
        <dbReference type="ChEBI" id="CHEBI:15378"/>
        <dbReference type="ChEBI" id="CHEBI:30616"/>
        <dbReference type="ChEBI" id="CHEBI:43474"/>
        <dbReference type="ChEBI" id="CHEBI:60344"/>
        <dbReference type="ChEBI" id="CHEBI:456216"/>
        <dbReference type="EC" id="7.6.2.5"/>
    </reaction>
</comment>
<comment type="subunit">
    <text evidence="1">The complex is composed of two ATP-binding proteins (CcmA) and two transmembrane proteins (CcmB).</text>
</comment>
<comment type="subcellular location">
    <subcellularLocation>
        <location evidence="1">Cell inner membrane</location>
        <topology evidence="1">Peripheral membrane protein</topology>
    </subcellularLocation>
</comment>
<comment type="similarity">
    <text evidence="1">Belongs to the ABC transporter superfamily. CcmA exporter (TC 3.A.1.107) family.</text>
</comment>
<keyword id="KW-0067">ATP-binding</keyword>
<keyword id="KW-0997">Cell inner membrane</keyword>
<keyword id="KW-1003">Cell membrane</keyword>
<keyword id="KW-0201">Cytochrome c-type biogenesis</keyword>
<keyword id="KW-0472">Membrane</keyword>
<keyword id="KW-0547">Nucleotide-binding</keyword>
<keyword id="KW-1278">Translocase</keyword>
<keyword id="KW-0813">Transport</keyword>
<reference key="1">
    <citation type="submission" date="2008-01" db="EMBL/GenBank/DDBJ databases">
        <title>Complete sequence of Pseudomonas putida GB-1.</title>
        <authorList>
            <consortium name="US DOE Joint Genome Institute"/>
            <person name="Copeland A."/>
            <person name="Lucas S."/>
            <person name="Lapidus A."/>
            <person name="Barry K."/>
            <person name="Glavina del Rio T."/>
            <person name="Dalin E."/>
            <person name="Tice H."/>
            <person name="Pitluck S."/>
            <person name="Bruce D."/>
            <person name="Goodwin L."/>
            <person name="Chertkov O."/>
            <person name="Brettin T."/>
            <person name="Detter J.C."/>
            <person name="Han C."/>
            <person name="Kuske C.R."/>
            <person name="Schmutz J."/>
            <person name="Larimer F."/>
            <person name="Land M."/>
            <person name="Hauser L."/>
            <person name="Kyrpides N."/>
            <person name="Kim E."/>
            <person name="McCarthy J.K."/>
            <person name="Richardson P."/>
        </authorList>
    </citation>
    <scope>NUCLEOTIDE SEQUENCE [LARGE SCALE GENOMIC DNA]</scope>
    <source>
        <strain>GB-1</strain>
    </source>
</reference>
<reference key="2">
    <citation type="journal article" date="1998" name="Appl. Environ. Microbiol.">
        <title>The cytochrome c maturation operon is involved in manganese oxidation in Pseudomonas putida GB-1.</title>
        <authorList>
            <person name="de Vrind J.P.M."/>
            <person name="Brouwers G.J."/>
            <person name="Corstjens P.L.A.M."/>
            <person name="den Dulk J."/>
            <person name="de Vrind-de Jong E.W."/>
        </authorList>
    </citation>
    <scope>NUCLEOTIDE SEQUENCE [GENOMIC DNA] OF 33-210</scope>
</reference>
<sequence length="210" mass="22746">MTLHLQAAGLACERDWRLLFEQLDFELGAGDMLQISGPNGSGKTSLLRLLAGLMQPTAGQILLGGKPLAEQRHALASILLWIGHAAGIKDLLTAEENLTWLCALHQPASREAIWAALEAVGLRGFEDVPCHTLSAGQQRRVALARLHLACPPLWILDEPFTALDKQGVAQLEAHLAAHCEQGGTVVLTTHHTLERKPSGYRELNLGQWAA</sequence>
<evidence type="ECO:0000255" key="1">
    <source>
        <dbReference type="HAMAP-Rule" id="MF_01707"/>
    </source>
</evidence>
<evidence type="ECO:0000305" key="2"/>
<name>CCMA_PSEPG</name>
<gene>
    <name evidence="1" type="primary">ccmA</name>
    <name type="ordered locus">PputGB1_3896</name>
</gene>
<proteinExistence type="inferred from homology"/>